<dbReference type="EC" id="2.1.1.199" evidence="1"/>
<dbReference type="EMBL" id="BX571657">
    <property type="protein sequence ID" value="CAE09333.1"/>
    <property type="molecule type" value="Genomic_DNA"/>
</dbReference>
<dbReference type="RefSeq" id="WP_011138133.1">
    <property type="nucleotide sequence ID" value="NC_005090.1"/>
</dbReference>
<dbReference type="SMR" id="Q7MSS6"/>
<dbReference type="STRING" id="273121.WS0170"/>
<dbReference type="KEGG" id="wsu:WS0170"/>
<dbReference type="eggNOG" id="COG0275">
    <property type="taxonomic scope" value="Bacteria"/>
</dbReference>
<dbReference type="HOGENOM" id="CLU_038422_3_0_7"/>
<dbReference type="Proteomes" id="UP000000422">
    <property type="component" value="Chromosome"/>
</dbReference>
<dbReference type="GO" id="GO:0005737">
    <property type="term" value="C:cytoplasm"/>
    <property type="evidence" value="ECO:0007669"/>
    <property type="project" value="UniProtKB-SubCell"/>
</dbReference>
<dbReference type="GO" id="GO:0071424">
    <property type="term" value="F:rRNA (cytosine-N4-)-methyltransferase activity"/>
    <property type="evidence" value="ECO:0007669"/>
    <property type="project" value="UniProtKB-UniRule"/>
</dbReference>
<dbReference type="GO" id="GO:0070475">
    <property type="term" value="P:rRNA base methylation"/>
    <property type="evidence" value="ECO:0007669"/>
    <property type="project" value="UniProtKB-UniRule"/>
</dbReference>
<dbReference type="Gene3D" id="1.10.150.170">
    <property type="entry name" value="Putative methyltransferase TM0872, insert domain"/>
    <property type="match status" value="1"/>
</dbReference>
<dbReference type="Gene3D" id="3.40.50.150">
    <property type="entry name" value="Vaccinia Virus protein VP39"/>
    <property type="match status" value="1"/>
</dbReference>
<dbReference type="HAMAP" id="MF_01007">
    <property type="entry name" value="16SrRNA_methyltr_H"/>
    <property type="match status" value="1"/>
</dbReference>
<dbReference type="InterPro" id="IPR002903">
    <property type="entry name" value="RsmH"/>
</dbReference>
<dbReference type="InterPro" id="IPR023397">
    <property type="entry name" value="SAM-dep_MeTrfase_MraW_recog"/>
</dbReference>
<dbReference type="InterPro" id="IPR029063">
    <property type="entry name" value="SAM-dependent_MTases_sf"/>
</dbReference>
<dbReference type="NCBIfam" id="TIGR00006">
    <property type="entry name" value="16S rRNA (cytosine(1402)-N(4))-methyltransferase RsmH"/>
    <property type="match status" value="1"/>
</dbReference>
<dbReference type="PANTHER" id="PTHR11265:SF0">
    <property type="entry name" value="12S RRNA N4-METHYLCYTIDINE METHYLTRANSFERASE"/>
    <property type="match status" value="1"/>
</dbReference>
<dbReference type="PANTHER" id="PTHR11265">
    <property type="entry name" value="S-ADENOSYL-METHYLTRANSFERASE MRAW"/>
    <property type="match status" value="1"/>
</dbReference>
<dbReference type="Pfam" id="PF01795">
    <property type="entry name" value="Methyltransf_5"/>
    <property type="match status" value="1"/>
</dbReference>
<dbReference type="PIRSF" id="PIRSF004486">
    <property type="entry name" value="MraW"/>
    <property type="match status" value="1"/>
</dbReference>
<dbReference type="SUPFAM" id="SSF81799">
    <property type="entry name" value="Putative methyltransferase TM0872, insert domain"/>
    <property type="match status" value="1"/>
</dbReference>
<dbReference type="SUPFAM" id="SSF53335">
    <property type="entry name" value="S-adenosyl-L-methionine-dependent methyltransferases"/>
    <property type="match status" value="1"/>
</dbReference>
<accession>Q7MSS6</accession>
<proteinExistence type="inferred from homology"/>
<keyword id="KW-0963">Cytoplasm</keyword>
<keyword id="KW-0489">Methyltransferase</keyword>
<keyword id="KW-1185">Reference proteome</keyword>
<keyword id="KW-0698">rRNA processing</keyword>
<keyword id="KW-0949">S-adenosyl-L-methionine</keyword>
<keyword id="KW-0808">Transferase</keyword>
<organism>
    <name type="scientific">Wolinella succinogenes (strain ATCC 29543 / DSM 1740 / CCUG 13145 / JCM 31913 / LMG 7466 / NCTC 11488 / FDC 602W)</name>
    <name type="common">Vibrio succinogenes</name>
    <dbReference type="NCBI Taxonomy" id="273121"/>
    <lineage>
        <taxon>Bacteria</taxon>
        <taxon>Pseudomonadati</taxon>
        <taxon>Campylobacterota</taxon>
        <taxon>Epsilonproteobacteria</taxon>
        <taxon>Campylobacterales</taxon>
        <taxon>Helicobacteraceae</taxon>
        <taxon>Wolinella</taxon>
    </lineage>
</organism>
<name>RSMH_WOLSU</name>
<comment type="function">
    <text evidence="1">Specifically methylates the N4 position of cytidine in position 1402 (C1402) of 16S rRNA.</text>
</comment>
<comment type="catalytic activity">
    <reaction evidence="1">
        <text>cytidine(1402) in 16S rRNA + S-adenosyl-L-methionine = N(4)-methylcytidine(1402) in 16S rRNA + S-adenosyl-L-homocysteine + H(+)</text>
        <dbReference type="Rhea" id="RHEA:42928"/>
        <dbReference type="Rhea" id="RHEA-COMP:10286"/>
        <dbReference type="Rhea" id="RHEA-COMP:10287"/>
        <dbReference type="ChEBI" id="CHEBI:15378"/>
        <dbReference type="ChEBI" id="CHEBI:57856"/>
        <dbReference type="ChEBI" id="CHEBI:59789"/>
        <dbReference type="ChEBI" id="CHEBI:74506"/>
        <dbReference type="ChEBI" id="CHEBI:82748"/>
        <dbReference type="EC" id="2.1.1.199"/>
    </reaction>
</comment>
<comment type="subcellular location">
    <subcellularLocation>
        <location evidence="1">Cytoplasm</location>
    </subcellularLocation>
</comment>
<comment type="similarity">
    <text evidence="1">Belongs to the methyltransferase superfamily. RsmH family.</text>
</comment>
<reference key="1">
    <citation type="journal article" date="2003" name="Proc. Natl. Acad. Sci. U.S.A.">
        <title>Complete genome sequence and analysis of Wolinella succinogenes.</title>
        <authorList>
            <person name="Baar C."/>
            <person name="Eppinger M."/>
            <person name="Raddatz G."/>
            <person name="Simon J."/>
            <person name="Lanz C."/>
            <person name="Klimmek O."/>
            <person name="Nandakumar R."/>
            <person name="Gross R."/>
            <person name="Rosinus A."/>
            <person name="Keller H."/>
            <person name="Jagtap P."/>
            <person name="Linke B."/>
            <person name="Meyer F."/>
            <person name="Lederer H."/>
            <person name="Schuster S.C."/>
        </authorList>
    </citation>
    <scope>NUCLEOTIDE SEQUENCE [LARGE SCALE GENOMIC DNA]</scope>
    <source>
        <strain>ATCC 29543 / DSM 1740 / CCUG 13145 / JCM 31913 / LMG 7466 / NCTC 11488 / FDC 602W</strain>
    </source>
</reference>
<sequence>MESPHLSVLKNEVLEIFAPLSEGYFIDCTLGFGGHSEAILKAHPKLSLIGIDQDPHALEFSQKRLAPFKDRFSFREGRFSEVLPTLKELPIAGILADIGVSSLQLDDSSRGFSFHSERLDMRMNPNAQLSALEVVNSYPQDRLERIFKEYGEIKESKKLVSLISEERKKGRITSAEALSRLIERHFKRVGNIHPATLAFQAIRIEVNDELGEIGRALQTIGEIAKGRVSIISFHSLEDRLVKNFFKEWSNSCLCPPEAFRCTCGNNHEKGQILTKKPLVATPEESKANPRSRSAKMRAFEFKS</sequence>
<protein>
    <recommendedName>
        <fullName evidence="1">Ribosomal RNA small subunit methyltransferase H</fullName>
        <ecNumber evidence="1">2.1.1.199</ecNumber>
    </recommendedName>
    <alternativeName>
        <fullName evidence="1">16S rRNA m(4)C1402 methyltransferase</fullName>
    </alternativeName>
    <alternativeName>
        <fullName evidence="1">rRNA (cytosine-N(4)-)-methyltransferase RsmH</fullName>
    </alternativeName>
</protein>
<evidence type="ECO:0000255" key="1">
    <source>
        <dbReference type="HAMAP-Rule" id="MF_01007"/>
    </source>
</evidence>
<feature type="chain" id="PRO_0000108749" description="Ribosomal RNA small subunit methyltransferase H">
    <location>
        <begin position="1"/>
        <end position="303"/>
    </location>
</feature>
<feature type="binding site" evidence="1">
    <location>
        <begin position="33"/>
        <end position="35"/>
    </location>
    <ligand>
        <name>S-adenosyl-L-methionine</name>
        <dbReference type="ChEBI" id="CHEBI:59789"/>
    </ligand>
</feature>
<feature type="binding site" evidence="1">
    <location>
        <position position="52"/>
    </location>
    <ligand>
        <name>S-adenosyl-L-methionine</name>
        <dbReference type="ChEBI" id="CHEBI:59789"/>
    </ligand>
</feature>
<feature type="binding site" evidence="1">
    <location>
        <position position="79"/>
    </location>
    <ligand>
        <name>S-adenosyl-L-methionine</name>
        <dbReference type="ChEBI" id="CHEBI:59789"/>
    </ligand>
</feature>
<feature type="binding site" evidence="1">
    <location>
        <position position="97"/>
    </location>
    <ligand>
        <name>S-adenosyl-L-methionine</name>
        <dbReference type="ChEBI" id="CHEBI:59789"/>
    </ligand>
</feature>
<feature type="binding site" evidence="1">
    <location>
        <position position="104"/>
    </location>
    <ligand>
        <name>S-adenosyl-L-methionine</name>
        <dbReference type="ChEBI" id="CHEBI:59789"/>
    </ligand>
</feature>
<gene>
    <name evidence="1" type="primary">rsmH</name>
    <name type="synonym">mraW</name>
    <name type="ordered locus">WS0170</name>
</gene>